<proteinExistence type="inferred from homology"/>
<protein>
    <recommendedName>
        <fullName evidence="1">Large ribosomal subunit protein bL17</fullName>
    </recommendedName>
    <alternativeName>
        <fullName evidence="2">50S ribosomal protein L17</fullName>
    </alternativeName>
</protein>
<gene>
    <name evidence="1" type="primary">rplQ</name>
    <name type="ordered locus">Bcen_2732</name>
</gene>
<feature type="chain" id="PRO_0000267843" description="Large ribosomal subunit protein bL17">
    <location>
        <begin position="1"/>
        <end position="131"/>
    </location>
</feature>
<dbReference type="EMBL" id="CP000378">
    <property type="protein sequence ID" value="ABF77630.1"/>
    <property type="molecule type" value="Genomic_DNA"/>
</dbReference>
<dbReference type="SMR" id="Q1BRX5"/>
<dbReference type="HOGENOM" id="CLU_074407_2_0_4"/>
<dbReference type="GO" id="GO:0022625">
    <property type="term" value="C:cytosolic large ribosomal subunit"/>
    <property type="evidence" value="ECO:0007669"/>
    <property type="project" value="TreeGrafter"/>
</dbReference>
<dbReference type="GO" id="GO:0003735">
    <property type="term" value="F:structural constituent of ribosome"/>
    <property type="evidence" value="ECO:0007669"/>
    <property type="project" value="InterPro"/>
</dbReference>
<dbReference type="GO" id="GO:0006412">
    <property type="term" value="P:translation"/>
    <property type="evidence" value="ECO:0007669"/>
    <property type="project" value="UniProtKB-UniRule"/>
</dbReference>
<dbReference type="FunFam" id="3.90.1030.10:FF:000001">
    <property type="entry name" value="50S ribosomal protein L17"/>
    <property type="match status" value="1"/>
</dbReference>
<dbReference type="Gene3D" id="3.90.1030.10">
    <property type="entry name" value="Ribosomal protein L17"/>
    <property type="match status" value="1"/>
</dbReference>
<dbReference type="HAMAP" id="MF_01368">
    <property type="entry name" value="Ribosomal_bL17"/>
    <property type="match status" value="1"/>
</dbReference>
<dbReference type="InterPro" id="IPR000456">
    <property type="entry name" value="Ribosomal_bL17"/>
</dbReference>
<dbReference type="InterPro" id="IPR047859">
    <property type="entry name" value="Ribosomal_bL17_CS"/>
</dbReference>
<dbReference type="InterPro" id="IPR036373">
    <property type="entry name" value="Ribosomal_bL17_sf"/>
</dbReference>
<dbReference type="NCBIfam" id="TIGR00059">
    <property type="entry name" value="L17"/>
    <property type="match status" value="1"/>
</dbReference>
<dbReference type="PANTHER" id="PTHR14413:SF16">
    <property type="entry name" value="LARGE RIBOSOMAL SUBUNIT PROTEIN BL17M"/>
    <property type="match status" value="1"/>
</dbReference>
<dbReference type="PANTHER" id="PTHR14413">
    <property type="entry name" value="RIBOSOMAL PROTEIN L17"/>
    <property type="match status" value="1"/>
</dbReference>
<dbReference type="Pfam" id="PF01196">
    <property type="entry name" value="Ribosomal_L17"/>
    <property type="match status" value="1"/>
</dbReference>
<dbReference type="SUPFAM" id="SSF64263">
    <property type="entry name" value="Prokaryotic ribosomal protein L17"/>
    <property type="match status" value="1"/>
</dbReference>
<dbReference type="PROSITE" id="PS01167">
    <property type="entry name" value="RIBOSOMAL_L17"/>
    <property type="match status" value="1"/>
</dbReference>
<keyword id="KW-0687">Ribonucleoprotein</keyword>
<keyword id="KW-0689">Ribosomal protein</keyword>
<comment type="subunit">
    <text evidence="1">Part of the 50S ribosomal subunit. Contacts protein L32.</text>
</comment>
<comment type="similarity">
    <text evidence="1">Belongs to the bacterial ribosomal protein bL17 family.</text>
</comment>
<reference key="1">
    <citation type="submission" date="2006-05" db="EMBL/GenBank/DDBJ databases">
        <title>Complete sequence of chromosome 1 of Burkholderia cenocepacia AU 1054.</title>
        <authorList>
            <consortium name="US DOE Joint Genome Institute"/>
            <person name="Copeland A."/>
            <person name="Lucas S."/>
            <person name="Lapidus A."/>
            <person name="Barry K."/>
            <person name="Detter J.C."/>
            <person name="Glavina del Rio T."/>
            <person name="Hammon N."/>
            <person name="Israni S."/>
            <person name="Dalin E."/>
            <person name="Tice H."/>
            <person name="Pitluck S."/>
            <person name="Chain P."/>
            <person name="Malfatti S."/>
            <person name="Shin M."/>
            <person name="Vergez L."/>
            <person name="Schmutz J."/>
            <person name="Larimer F."/>
            <person name="Land M."/>
            <person name="Hauser L."/>
            <person name="Kyrpides N."/>
            <person name="Lykidis A."/>
            <person name="LiPuma J.J."/>
            <person name="Konstantinidis K."/>
            <person name="Tiedje J.M."/>
            <person name="Richardson P."/>
        </authorList>
    </citation>
    <scope>NUCLEOTIDE SEQUENCE [LARGE SCALE GENOMIC DNA]</scope>
    <source>
        <strain>AU 1054</strain>
    </source>
</reference>
<sequence length="131" mass="15050">MRHRHGLRKLNRTSSHRLAMLRNMSNSLIEHEVIKTTLPKAKELRKVVEPLITLGKKPSLANRRLAFNRLRDRDSVAKLFDVLGPRFANRPGGYLRVLKFGFRVGDNAPMALVELLDRPEVDETENVQEAE</sequence>
<name>RL17_BURO1</name>
<organism>
    <name type="scientific">Burkholderia orbicola (strain AU 1054)</name>
    <dbReference type="NCBI Taxonomy" id="331271"/>
    <lineage>
        <taxon>Bacteria</taxon>
        <taxon>Pseudomonadati</taxon>
        <taxon>Pseudomonadota</taxon>
        <taxon>Betaproteobacteria</taxon>
        <taxon>Burkholderiales</taxon>
        <taxon>Burkholderiaceae</taxon>
        <taxon>Burkholderia</taxon>
        <taxon>Burkholderia cepacia complex</taxon>
        <taxon>Burkholderia orbicola</taxon>
    </lineage>
</organism>
<accession>Q1BRX5</accession>
<evidence type="ECO:0000255" key="1">
    <source>
        <dbReference type="HAMAP-Rule" id="MF_01368"/>
    </source>
</evidence>
<evidence type="ECO:0000305" key="2"/>